<protein>
    <recommendedName>
        <fullName evidence="1">3-dehydroquinate dehydratase</fullName>
        <shortName evidence="1">3-dehydroquinase</shortName>
        <ecNumber evidence="1">4.2.1.10</ecNumber>
    </recommendedName>
    <alternativeName>
        <fullName evidence="1">Type I DHQase</fullName>
    </alternativeName>
    <alternativeName>
        <fullName evidence="1">Type I dehydroquinase</fullName>
        <shortName evidence="1">DHQ1</shortName>
    </alternativeName>
</protein>
<proteinExistence type="inferred from homology"/>
<dbReference type="EC" id="4.2.1.10" evidence="1"/>
<dbReference type="EMBL" id="CP000730">
    <property type="protein sequence ID" value="ABX28857.1"/>
    <property type="molecule type" value="Genomic_DNA"/>
</dbReference>
<dbReference type="RefSeq" id="WP_000150017.1">
    <property type="nucleotide sequence ID" value="NC_010079.1"/>
</dbReference>
<dbReference type="SMR" id="A8Z1D4"/>
<dbReference type="KEGG" id="sax:USA300HOU_0836"/>
<dbReference type="HOGENOM" id="CLU_064444_2_1_9"/>
<dbReference type="UniPathway" id="UPA00053">
    <property type="reaction ID" value="UER00086"/>
</dbReference>
<dbReference type="GO" id="GO:0003855">
    <property type="term" value="F:3-dehydroquinate dehydratase activity"/>
    <property type="evidence" value="ECO:0007669"/>
    <property type="project" value="UniProtKB-UniRule"/>
</dbReference>
<dbReference type="GO" id="GO:0046279">
    <property type="term" value="P:3,4-dihydroxybenzoate biosynthetic process"/>
    <property type="evidence" value="ECO:0007669"/>
    <property type="project" value="TreeGrafter"/>
</dbReference>
<dbReference type="GO" id="GO:0008652">
    <property type="term" value="P:amino acid biosynthetic process"/>
    <property type="evidence" value="ECO:0007669"/>
    <property type="project" value="UniProtKB-KW"/>
</dbReference>
<dbReference type="GO" id="GO:0009073">
    <property type="term" value="P:aromatic amino acid family biosynthetic process"/>
    <property type="evidence" value="ECO:0007669"/>
    <property type="project" value="UniProtKB-KW"/>
</dbReference>
<dbReference type="GO" id="GO:0009423">
    <property type="term" value="P:chorismate biosynthetic process"/>
    <property type="evidence" value="ECO:0007669"/>
    <property type="project" value="UniProtKB-UniRule"/>
</dbReference>
<dbReference type="CDD" id="cd00502">
    <property type="entry name" value="DHQase_I"/>
    <property type="match status" value="1"/>
</dbReference>
<dbReference type="FunFam" id="3.20.20.70:FF:000216">
    <property type="entry name" value="3-dehydroquinate dehydratase"/>
    <property type="match status" value="1"/>
</dbReference>
<dbReference type="Gene3D" id="3.20.20.70">
    <property type="entry name" value="Aldolase class I"/>
    <property type="match status" value="1"/>
</dbReference>
<dbReference type="HAMAP" id="MF_00214">
    <property type="entry name" value="AroD"/>
    <property type="match status" value="1"/>
</dbReference>
<dbReference type="InterPro" id="IPR013785">
    <property type="entry name" value="Aldolase_TIM"/>
</dbReference>
<dbReference type="InterPro" id="IPR001381">
    <property type="entry name" value="DHquinase_I"/>
</dbReference>
<dbReference type="InterPro" id="IPR050146">
    <property type="entry name" value="Type-I_3-dehydroquinase"/>
</dbReference>
<dbReference type="NCBIfam" id="TIGR01093">
    <property type="entry name" value="aroD"/>
    <property type="match status" value="1"/>
</dbReference>
<dbReference type="PANTHER" id="PTHR43699">
    <property type="entry name" value="3-DEHYDROQUINATE DEHYDRATASE"/>
    <property type="match status" value="1"/>
</dbReference>
<dbReference type="PANTHER" id="PTHR43699:SF1">
    <property type="entry name" value="3-DEHYDROQUINATE DEHYDRATASE"/>
    <property type="match status" value="1"/>
</dbReference>
<dbReference type="Pfam" id="PF01487">
    <property type="entry name" value="DHquinase_I"/>
    <property type="match status" value="1"/>
</dbReference>
<dbReference type="SUPFAM" id="SSF51569">
    <property type="entry name" value="Aldolase"/>
    <property type="match status" value="1"/>
</dbReference>
<sequence length="238" mass="26869">MTHVEVVATIAPQLSIEETLIQKINHRIDAIDVLELRIDQIENVTVDQVAEMITKLKVMQDSFKLLVTYRTKLQGGYGQFTNDSYLNLISDLANINGIDMIDIEWQADIDIEKHQRIITHLQQYNKEVVISHHNFESTPPLDELQFIFFKMQKFNPEYVKLAVMPHNKNDVLNLLQAMSTFSDTMDCKVVGISMSKLGLISRTAQGVFGGALTYGCIGVPQAPGQIDVTDLKAQVTLY</sequence>
<reference key="1">
    <citation type="journal article" date="2007" name="BMC Microbiol.">
        <title>Subtle genetic changes enhance virulence of methicillin resistant and sensitive Staphylococcus aureus.</title>
        <authorList>
            <person name="Highlander S.K."/>
            <person name="Hulten K.G."/>
            <person name="Qin X."/>
            <person name="Jiang H."/>
            <person name="Yerrapragada S."/>
            <person name="Mason E.O. Jr."/>
            <person name="Shang Y."/>
            <person name="Williams T.M."/>
            <person name="Fortunov R.M."/>
            <person name="Liu Y."/>
            <person name="Igboeli O."/>
            <person name="Petrosino J."/>
            <person name="Tirumalai M."/>
            <person name="Uzman A."/>
            <person name="Fox G.E."/>
            <person name="Cardenas A.M."/>
            <person name="Muzny D.M."/>
            <person name="Hemphill L."/>
            <person name="Ding Y."/>
            <person name="Dugan S."/>
            <person name="Blyth P.R."/>
            <person name="Buhay C.J."/>
            <person name="Dinh H.H."/>
            <person name="Hawes A.C."/>
            <person name="Holder M."/>
            <person name="Kovar C.L."/>
            <person name="Lee S.L."/>
            <person name="Liu W."/>
            <person name="Nazareth L.V."/>
            <person name="Wang Q."/>
            <person name="Zhou J."/>
            <person name="Kaplan S.L."/>
            <person name="Weinstock G.M."/>
        </authorList>
    </citation>
    <scope>NUCLEOTIDE SEQUENCE [LARGE SCALE GENOMIC DNA]</scope>
    <source>
        <strain>USA300 / TCH1516</strain>
    </source>
</reference>
<gene>
    <name evidence="1" type="primary">aroD</name>
    <name type="ordered locus">USA300HOU_0836</name>
</gene>
<keyword id="KW-0028">Amino-acid biosynthesis</keyword>
<keyword id="KW-0057">Aromatic amino acid biosynthesis</keyword>
<keyword id="KW-0456">Lyase</keyword>
<keyword id="KW-0704">Schiff base</keyword>
<accession>A8Z1D4</accession>
<name>AROD_STAAT</name>
<comment type="function">
    <text evidence="1">Involved in the third step of the chorismate pathway, which leads to the biosynthesis of aromatic amino acids. Catalyzes the cis-dehydration of 3-dehydroquinate (DHQ) and introduces the first double bond of the aromatic ring to yield 3-dehydroshikimate.</text>
</comment>
<comment type="catalytic activity">
    <reaction evidence="1">
        <text>3-dehydroquinate = 3-dehydroshikimate + H2O</text>
        <dbReference type="Rhea" id="RHEA:21096"/>
        <dbReference type="ChEBI" id="CHEBI:15377"/>
        <dbReference type="ChEBI" id="CHEBI:16630"/>
        <dbReference type="ChEBI" id="CHEBI:32364"/>
        <dbReference type="EC" id="4.2.1.10"/>
    </reaction>
</comment>
<comment type="pathway">
    <text evidence="1">Metabolic intermediate biosynthesis; chorismate biosynthesis; chorismate from D-erythrose 4-phosphate and phosphoenolpyruvate: step 3/7.</text>
</comment>
<comment type="subunit">
    <text evidence="1">Homodimer.</text>
</comment>
<comment type="similarity">
    <text evidence="1">Belongs to the type-I 3-dehydroquinase family.</text>
</comment>
<organism>
    <name type="scientific">Staphylococcus aureus (strain USA300 / TCH1516)</name>
    <dbReference type="NCBI Taxonomy" id="451516"/>
    <lineage>
        <taxon>Bacteria</taxon>
        <taxon>Bacillati</taxon>
        <taxon>Bacillota</taxon>
        <taxon>Bacilli</taxon>
        <taxon>Bacillales</taxon>
        <taxon>Staphylococcaceae</taxon>
        <taxon>Staphylococcus</taxon>
    </lineage>
</organism>
<evidence type="ECO:0000255" key="1">
    <source>
        <dbReference type="HAMAP-Rule" id="MF_00214"/>
    </source>
</evidence>
<feature type="chain" id="PRO_1000078050" description="3-dehydroquinate dehydratase">
    <location>
        <begin position="1"/>
        <end position="238"/>
    </location>
</feature>
<feature type="active site" description="Proton donor/acceptor" evidence="1">
    <location>
        <position position="133"/>
    </location>
</feature>
<feature type="active site" description="Schiff-base intermediate with substrate" evidence="1">
    <location>
        <position position="160"/>
    </location>
</feature>
<feature type="binding site" evidence="1">
    <location>
        <begin position="35"/>
        <end position="37"/>
    </location>
    <ligand>
        <name>3-dehydroquinate</name>
        <dbReference type="ChEBI" id="CHEBI:32364"/>
    </ligand>
</feature>
<feature type="binding site" evidence="1">
    <location>
        <position position="70"/>
    </location>
    <ligand>
        <name>3-dehydroquinate</name>
        <dbReference type="ChEBI" id="CHEBI:32364"/>
    </ligand>
</feature>
<feature type="binding site" evidence="1">
    <location>
        <position position="202"/>
    </location>
    <ligand>
        <name>3-dehydroquinate</name>
        <dbReference type="ChEBI" id="CHEBI:32364"/>
    </ligand>
</feature>
<feature type="binding site" evidence="1">
    <location>
        <position position="225"/>
    </location>
    <ligand>
        <name>3-dehydroquinate</name>
        <dbReference type="ChEBI" id="CHEBI:32364"/>
    </ligand>
</feature>